<gene>
    <name evidence="1" type="primary">rpsB</name>
    <name type="ordered locus">Reut_A1881</name>
</gene>
<evidence type="ECO:0000255" key="1">
    <source>
        <dbReference type="HAMAP-Rule" id="MF_00291"/>
    </source>
</evidence>
<evidence type="ECO:0000305" key="2"/>
<accession>Q470D7</accession>
<proteinExistence type="inferred from homology"/>
<keyword id="KW-0687">Ribonucleoprotein</keyword>
<keyword id="KW-0689">Ribosomal protein</keyword>
<protein>
    <recommendedName>
        <fullName evidence="1">Small ribosomal subunit protein uS2</fullName>
    </recommendedName>
    <alternativeName>
        <fullName evidence="2">30S ribosomal protein S2</fullName>
    </alternativeName>
</protein>
<reference key="1">
    <citation type="journal article" date="2010" name="PLoS ONE">
        <title>The complete multipartite genome sequence of Cupriavidus necator JMP134, a versatile pollutant degrader.</title>
        <authorList>
            <person name="Lykidis A."/>
            <person name="Perez-Pantoja D."/>
            <person name="Ledger T."/>
            <person name="Mavromatis K."/>
            <person name="Anderson I.J."/>
            <person name="Ivanova N.N."/>
            <person name="Hooper S.D."/>
            <person name="Lapidus A."/>
            <person name="Lucas S."/>
            <person name="Gonzalez B."/>
            <person name="Kyrpides N.C."/>
        </authorList>
    </citation>
    <scope>NUCLEOTIDE SEQUENCE [LARGE SCALE GENOMIC DNA]</scope>
    <source>
        <strain>JMP134 / LMG 1197</strain>
    </source>
</reference>
<organism>
    <name type="scientific">Cupriavidus pinatubonensis (strain JMP 134 / LMG 1197)</name>
    <name type="common">Cupriavidus necator (strain JMP 134)</name>
    <dbReference type="NCBI Taxonomy" id="264198"/>
    <lineage>
        <taxon>Bacteria</taxon>
        <taxon>Pseudomonadati</taxon>
        <taxon>Pseudomonadota</taxon>
        <taxon>Betaproteobacteria</taxon>
        <taxon>Burkholderiales</taxon>
        <taxon>Burkholderiaceae</taxon>
        <taxon>Cupriavidus</taxon>
    </lineage>
</organism>
<dbReference type="EMBL" id="CP000090">
    <property type="protein sequence ID" value="AAZ61246.1"/>
    <property type="molecule type" value="Genomic_DNA"/>
</dbReference>
<dbReference type="SMR" id="Q470D7"/>
<dbReference type="STRING" id="264198.Reut_A1881"/>
<dbReference type="KEGG" id="reu:Reut_A1881"/>
<dbReference type="eggNOG" id="COG0052">
    <property type="taxonomic scope" value="Bacteria"/>
</dbReference>
<dbReference type="HOGENOM" id="CLU_040318_1_2_4"/>
<dbReference type="OrthoDB" id="9808036at2"/>
<dbReference type="GO" id="GO:0022627">
    <property type="term" value="C:cytosolic small ribosomal subunit"/>
    <property type="evidence" value="ECO:0007669"/>
    <property type="project" value="TreeGrafter"/>
</dbReference>
<dbReference type="GO" id="GO:0003735">
    <property type="term" value="F:structural constituent of ribosome"/>
    <property type="evidence" value="ECO:0007669"/>
    <property type="project" value="InterPro"/>
</dbReference>
<dbReference type="GO" id="GO:0006412">
    <property type="term" value="P:translation"/>
    <property type="evidence" value="ECO:0007669"/>
    <property type="project" value="UniProtKB-UniRule"/>
</dbReference>
<dbReference type="CDD" id="cd01425">
    <property type="entry name" value="RPS2"/>
    <property type="match status" value="1"/>
</dbReference>
<dbReference type="FunFam" id="1.10.287.610:FF:000001">
    <property type="entry name" value="30S ribosomal protein S2"/>
    <property type="match status" value="1"/>
</dbReference>
<dbReference type="Gene3D" id="3.40.50.10490">
    <property type="entry name" value="Glucose-6-phosphate isomerase like protein, domain 1"/>
    <property type="match status" value="1"/>
</dbReference>
<dbReference type="Gene3D" id="1.10.287.610">
    <property type="entry name" value="Helix hairpin bin"/>
    <property type="match status" value="1"/>
</dbReference>
<dbReference type="HAMAP" id="MF_00291_B">
    <property type="entry name" value="Ribosomal_uS2_B"/>
    <property type="match status" value="1"/>
</dbReference>
<dbReference type="InterPro" id="IPR001865">
    <property type="entry name" value="Ribosomal_uS2"/>
</dbReference>
<dbReference type="InterPro" id="IPR005706">
    <property type="entry name" value="Ribosomal_uS2_bac/mit/plastid"/>
</dbReference>
<dbReference type="InterPro" id="IPR023591">
    <property type="entry name" value="Ribosomal_uS2_flav_dom_sf"/>
</dbReference>
<dbReference type="NCBIfam" id="TIGR01011">
    <property type="entry name" value="rpsB_bact"/>
    <property type="match status" value="1"/>
</dbReference>
<dbReference type="PANTHER" id="PTHR12534">
    <property type="entry name" value="30S RIBOSOMAL PROTEIN S2 PROKARYOTIC AND ORGANELLAR"/>
    <property type="match status" value="1"/>
</dbReference>
<dbReference type="PANTHER" id="PTHR12534:SF0">
    <property type="entry name" value="SMALL RIBOSOMAL SUBUNIT PROTEIN US2M"/>
    <property type="match status" value="1"/>
</dbReference>
<dbReference type="Pfam" id="PF00318">
    <property type="entry name" value="Ribosomal_S2"/>
    <property type="match status" value="1"/>
</dbReference>
<dbReference type="PRINTS" id="PR00395">
    <property type="entry name" value="RIBOSOMALS2"/>
</dbReference>
<dbReference type="SUPFAM" id="SSF52313">
    <property type="entry name" value="Ribosomal protein S2"/>
    <property type="match status" value="1"/>
</dbReference>
<sequence length="247" mass="27225">MSVTMREMLEAGCHFGHQTRFWNPKMAPFIFGHRNKIHIINLEKTLPMFQDALKYVRQLAANRGTIMFVGTKRQSREILAEEAGRAGMPYVDARWLGGMLTNFKTVKTSIKRLKDMEAAKEAGALDTMSKKEALMFEREMIKLEKSIGGIKEMGGIPDAIFVVDVGYHKIAVTEANKLGIPVIGVVDTNHSPEGIDYVIPGNDDSSKAVALYVRGVADAILEGRANAVQEVVEAARGGDDFVEVQEG</sequence>
<comment type="similarity">
    <text evidence="1">Belongs to the universal ribosomal protein uS2 family.</text>
</comment>
<feature type="chain" id="PRO_1000004041" description="Small ribosomal subunit protein uS2">
    <location>
        <begin position="1"/>
        <end position="247"/>
    </location>
</feature>
<name>RS2_CUPPJ</name>